<proteinExistence type="inferred from homology"/>
<reference key="1">
    <citation type="submission" date="2008-10" db="EMBL/GenBank/DDBJ databases">
        <title>Genome sequence of Bacillus cereus AH187.</title>
        <authorList>
            <person name="Dodson R.J."/>
            <person name="Durkin A.S."/>
            <person name="Rosovitz M.J."/>
            <person name="Rasko D.A."/>
            <person name="Kolsto A.B."/>
            <person name="Okstad O.A."/>
            <person name="Ravel J."/>
            <person name="Sutton G."/>
        </authorList>
    </citation>
    <scope>NUCLEOTIDE SEQUENCE [LARGE SCALE GENOMIC DNA]</scope>
    <source>
        <strain>AH187</strain>
    </source>
</reference>
<feature type="chain" id="PRO_1000187387" description="2-hydroxy-3-keto-5-methylthiopentenyl-1-phosphate phosphatase">
    <location>
        <begin position="1"/>
        <end position="219"/>
    </location>
</feature>
<accession>B7HN15</accession>
<name>MTNX_BACC7</name>
<comment type="function">
    <text evidence="1">Dephosphorylates 2-hydroxy-3-keto-5-methylthiopentenyl-1-phosphate (HK-MTPenyl-1-P) yielding 1,2-dihydroxy-3-keto-5-methylthiopentene (DHK-MTPene).</text>
</comment>
<comment type="catalytic activity">
    <reaction evidence="1">
        <text>2-hydroxy-5-methylsulfanyl-3-oxopent-1-enyl phosphate + H2O = 1,2-dihydroxy-5-(methylsulfanyl)pent-1-en-3-one + phosphate</text>
        <dbReference type="Rhea" id="RHEA:14481"/>
        <dbReference type="ChEBI" id="CHEBI:15377"/>
        <dbReference type="ChEBI" id="CHEBI:43474"/>
        <dbReference type="ChEBI" id="CHEBI:49252"/>
        <dbReference type="ChEBI" id="CHEBI:59505"/>
        <dbReference type="EC" id="3.1.3.87"/>
    </reaction>
</comment>
<comment type="pathway">
    <text evidence="1">Amino-acid biosynthesis; L-methionine biosynthesis via salvage pathway; L-methionine from S-methyl-5-thio-alpha-D-ribose 1-phosphate: step 4/6.</text>
</comment>
<comment type="similarity">
    <text evidence="1">Belongs to the HAD-like hydrolase superfamily. MtnX family.</text>
</comment>
<sequence>MSIQVFCDFDGTITNNDNIMSIMEKFAPPEAEEVKNRILSQELSIQEGVSQLFQFIPTNLHDEIIQFLIETAEIRNGFHEFIQFVNENNISFYVISGGMDFFVYPLLQGLIPKEQIYCNETDFSNEYITVNWPHPCDRLCQNHCGLCKSSLIRKLSDTNDFHIVIGDSITDLQAAKQADKVFARDFLITKCEENHISYTAFETFHDVQTELKHLLEVKL</sequence>
<evidence type="ECO:0000255" key="1">
    <source>
        <dbReference type="HAMAP-Rule" id="MF_01680"/>
    </source>
</evidence>
<gene>
    <name evidence="1" type="primary">mtnX</name>
    <name type="ordered locus">BCAH187_A4168</name>
</gene>
<keyword id="KW-0028">Amino-acid biosynthesis</keyword>
<keyword id="KW-0378">Hydrolase</keyword>
<keyword id="KW-0486">Methionine biosynthesis</keyword>
<protein>
    <recommendedName>
        <fullName evidence="1">2-hydroxy-3-keto-5-methylthiopentenyl-1-phosphate phosphatase</fullName>
        <shortName evidence="1">HK-MTPenyl-1-P phosphatase</shortName>
        <ecNumber evidence="1">3.1.3.87</ecNumber>
    </recommendedName>
</protein>
<dbReference type="EC" id="3.1.3.87" evidence="1"/>
<dbReference type="EMBL" id="CP001177">
    <property type="protein sequence ID" value="ACJ77304.1"/>
    <property type="molecule type" value="Genomic_DNA"/>
</dbReference>
<dbReference type="SMR" id="B7HN15"/>
<dbReference type="KEGG" id="bcr:BCAH187_A4168"/>
<dbReference type="HOGENOM" id="CLU_058495_2_1_9"/>
<dbReference type="UniPathway" id="UPA00904">
    <property type="reaction ID" value="UER00877"/>
</dbReference>
<dbReference type="Proteomes" id="UP000002214">
    <property type="component" value="Chromosome"/>
</dbReference>
<dbReference type="GO" id="GO:0043716">
    <property type="term" value="F:2-hydroxy-3-keto-5-methylthiopentenyl-1-phosphate phosphatase activity"/>
    <property type="evidence" value="ECO:0007669"/>
    <property type="project" value="UniProtKB-UniRule"/>
</dbReference>
<dbReference type="GO" id="GO:0019509">
    <property type="term" value="P:L-methionine salvage from methylthioadenosine"/>
    <property type="evidence" value="ECO:0007669"/>
    <property type="project" value="UniProtKB-UniRule"/>
</dbReference>
<dbReference type="CDD" id="cd07524">
    <property type="entry name" value="HAD_Pase"/>
    <property type="match status" value="1"/>
</dbReference>
<dbReference type="Gene3D" id="3.90.1470.20">
    <property type="match status" value="1"/>
</dbReference>
<dbReference type="Gene3D" id="3.40.50.1000">
    <property type="entry name" value="HAD superfamily/HAD-like"/>
    <property type="match status" value="1"/>
</dbReference>
<dbReference type="HAMAP" id="MF_01680">
    <property type="entry name" value="Salvage_MtnX"/>
    <property type="match status" value="1"/>
</dbReference>
<dbReference type="InterPro" id="IPR050849">
    <property type="entry name" value="HAD-like_hydrolase_phosphatase"/>
</dbReference>
<dbReference type="InterPro" id="IPR036412">
    <property type="entry name" value="HAD-like_sf"/>
</dbReference>
<dbReference type="InterPro" id="IPR017718">
    <property type="entry name" value="HAD-SF_hydro_IB_MtnX"/>
</dbReference>
<dbReference type="InterPro" id="IPR006384">
    <property type="entry name" value="HAD_hydro_PyrdxlP_Pase-like"/>
</dbReference>
<dbReference type="InterPro" id="IPR023214">
    <property type="entry name" value="HAD_sf"/>
</dbReference>
<dbReference type="NCBIfam" id="TIGR01489">
    <property type="entry name" value="DKMTPPase-SF"/>
    <property type="match status" value="1"/>
</dbReference>
<dbReference type="NCBIfam" id="TIGR01488">
    <property type="entry name" value="HAD-SF-IB"/>
    <property type="match status" value="1"/>
</dbReference>
<dbReference type="NCBIfam" id="NF007103">
    <property type="entry name" value="PRK09552.1"/>
    <property type="match status" value="1"/>
</dbReference>
<dbReference type="NCBIfam" id="TIGR03333">
    <property type="entry name" value="salvage_mtnX"/>
    <property type="match status" value="1"/>
</dbReference>
<dbReference type="PANTHER" id="PTHR28181:SF2">
    <property type="entry name" value="PHOSPHORIC MONOESTER HYDROLASE"/>
    <property type="match status" value="1"/>
</dbReference>
<dbReference type="PANTHER" id="PTHR28181">
    <property type="entry name" value="UPF0655 PROTEIN YCR015C"/>
    <property type="match status" value="1"/>
</dbReference>
<dbReference type="Pfam" id="PF12710">
    <property type="entry name" value="HAD"/>
    <property type="match status" value="1"/>
</dbReference>
<dbReference type="SUPFAM" id="SSF56784">
    <property type="entry name" value="HAD-like"/>
    <property type="match status" value="1"/>
</dbReference>
<organism>
    <name type="scientific">Bacillus cereus (strain AH187)</name>
    <dbReference type="NCBI Taxonomy" id="405534"/>
    <lineage>
        <taxon>Bacteria</taxon>
        <taxon>Bacillati</taxon>
        <taxon>Bacillota</taxon>
        <taxon>Bacilli</taxon>
        <taxon>Bacillales</taxon>
        <taxon>Bacillaceae</taxon>
        <taxon>Bacillus</taxon>
        <taxon>Bacillus cereus group</taxon>
    </lineage>
</organism>